<reference key="1">
    <citation type="journal article" date="2005" name="Nucleic Acids Res.">
        <title>Genomic blueprint of Hahella chejuensis, a marine microbe producing an algicidal agent.</title>
        <authorList>
            <person name="Jeong H."/>
            <person name="Yim J.H."/>
            <person name="Lee C."/>
            <person name="Choi S.-H."/>
            <person name="Park Y.K."/>
            <person name="Yoon S.H."/>
            <person name="Hur C.-G."/>
            <person name="Kang H.-Y."/>
            <person name="Kim D."/>
            <person name="Lee H.H."/>
            <person name="Park K.H."/>
            <person name="Park S.-H."/>
            <person name="Park H.-S."/>
            <person name="Lee H.K."/>
            <person name="Oh T.K."/>
            <person name="Kim J.F."/>
        </authorList>
    </citation>
    <scope>NUCLEOTIDE SEQUENCE [LARGE SCALE GENOMIC DNA]</scope>
    <source>
        <strain>KCTC 2396</strain>
    </source>
</reference>
<dbReference type="EC" id="2.1.1.166" evidence="1"/>
<dbReference type="EMBL" id="CP000155">
    <property type="protein sequence ID" value="ABC28103.1"/>
    <property type="molecule type" value="Genomic_DNA"/>
</dbReference>
<dbReference type="RefSeq" id="WP_011395176.1">
    <property type="nucleotide sequence ID" value="NC_007645.1"/>
</dbReference>
<dbReference type="SMR" id="Q2SMM1"/>
<dbReference type="STRING" id="349521.HCH_01231"/>
<dbReference type="KEGG" id="hch:HCH_01231"/>
<dbReference type="eggNOG" id="COG0293">
    <property type="taxonomic scope" value="Bacteria"/>
</dbReference>
<dbReference type="HOGENOM" id="CLU_009422_4_0_6"/>
<dbReference type="OrthoDB" id="9790080at2"/>
<dbReference type="Proteomes" id="UP000000238">
    <property type="component" value="Chromosome"/>
</dbReference>
<dbReference type="GO" id="GO:0005737">
    <property type="term" value="C:cytoplasm"/>
    <property type="evidence" value="ECO:0007669"/>
    <property type="project" value="UniProtKB-SubCell"/>
</dbReference>
<dbReference type="GO" id="GO:0008650">
    <property type="term" value="F:rRNA (uridine-2'-O-)-methyltransferase activity"/>
    <property type="evidence" value="ECO:0007669"/>
    <property type="project" value="UniProtKB-UniRule"/>
</dbReference>
<dbReference type="FunFam" id="3.40.50.150:FF:000005">
    <property type="entry name" value="Ribosomal RNA large subunit methyltransferase E"/>
    <property type="match status" value="1"/>
</dbReference>
<dbReference type="Gene3D" id="3.40.50.150">
    <property type="entry name" value="Vaccinia Virus protein VP39"/>
    <property type="match status" value="1"/>
</dbReference>
<dbReference type="HAMAP" id="MF_01547">
    <property type="entry name" value="RNA_methyltr_E"/>
    <property type="match status" value="1"/>
</dbReference>
<dbReference type="InterPro" id="IPR050082">
    <property type="entry name" value="RNA_methyltr_RlmE"/>
</dbReference>
<dbReference type="InterPro" id="IPR002877">
    <property type="entry name" value="RNA_MeTrfase_FtsJ_dom"/>
</dbReference>
<dbReference type="InterPro" id="IPR015507">
    <property type="entry name" value="rRNA-MeTfrase_E"/>
</dbReference>
<dbReference type="InterPro" id="IPR029063">
    <property type="entry name" value="SAM-dependent_MTases_sf"/>
</dbReference>
<dbReference type="NCBIfam" id="NF008390">
    <property type="entry name" value="PRK11188.1"/>
    <property type="match status" value="1"/>
</dbReference>
<dbReference type="PANTHER" id="PTHR10920">
    <property type="entry name" value="RIBOSOMAL RNA METHYLTRANSFERASE"/>
    <property type="match status" value="1"/>
</dbReference>
<dbReference type="PANTHER" id="PTHR10920:SF18">
    <property type="entry name" value="RRNA METHYLTRANSFERASE 2, MITOCHONDRIAL"/>
    <property type="match status" value="1"/>
</dbReference>
<dbReference type="Pfam" id="PF01728">
    <property type="entry name" value="FtsJ"/>
    <property type="match status" value="1"/>
</dbReference>
<dbReference type="PIRSF" id="PIRSF005461">
    <property type="entry name" value="23S_rRNA_mtase"/>
    <property type="match status" value="1"/>
</dbReference>
<dbReference type="SUPFAM" id="SSF53335">
    <property type="entry name" value="S-adenosyl-L-methionine-dependent methyltransferases"/>
    <property type="match status" value="1"/>
</dbReference>
<sequence>MGRSKSSSRWLNEHHSDVYVKKSKEDGFRSRASYKLIELDRQDKLLRPGMTVIDLGAAPGGWSQVVADVVGDQGKVVACDLLSMDSIAGVTFFQGDFTEDEMLDAILNEVNSRPVDLVISDMAPNMSGMKSVDIPKAMYLVELALDLACRVLKKNGCFVAKVFQGEGFDQILQESRGRFSSVNIRKPDASRARSREIYLVAKGFRG</sequence>
<evidence type="ECO:0000255" key="1">
    <source>
        <dbReference type="HAMAP-Rule" id="MF_01547"/>
    </source>
</evidence>
<accession>Q2SMM1</accession>
<name>RLME_HAHCH</name>
<gene>
    <name evidence="1" type="primary">rlmE</name>
    <name evidence="1" type="synonym">ftsJ</name>
    <name evidence="1" type="synonym">rrmJ</name>
    <name type="ordered locus">HCH_01231</name>
</gene>
<protein>
    <recommendedName>
        <fullName evidence="1">Ribosomal RNA large subunit methyltransferase E</fullName>
        <ecNumber evidence="1">2.1.1.166</ecNumber>
    </recommendedName>
    <alternativeName>
        <fullName evidence="1">23S rRNA Um2552 methyltransferase</fullName>
    </alternativeName>
    <alternativeName>
        <fullName evidence="1">rRNA (uridine-2'-O-)-methyltransferase</fullName>
    </alternativeName>
</protein>
<proteinExistence type="inferred from homology"/>
<keyword id="KW-0963">Cytoplasm</keyword>
<keyword id="KW-0489">Methyltransferase</keyword>
<keyword id="KW-1185">Reference proteome</keyword>
<keyword id="KW-0698">rRNA processing</keyword>
<keyword id="KW-0949">S-adenosyl-L-methionine</keyword>
<keyword id="KW-0808">Transferase</keyword>
<organism>
    <name type="scientific">Hahella chejuensis (strain KCTC 2396)</name>
    <dbReference type="NCBI Taxonomy" id="349521"/>
    <lineage>
        <taxon>Bacteria</taxon>
        <taxon>Pseudomonadati</taxon>
        <taxon>Pseudomonadota</taxon>
        <taxon>Gammaproteobacteria</taxon>
        <taxon>Oceanospirillales</taxon>
        <taxon>Hahellaceae</taxon>
        <taxon>Hahella</taxon>
    </lineage>
</organism>
<feature type="chain" id="PRO_0000282752" description="Ribosomal RNA large subunit methyltransferase E">
    <location>
        <begin position="1"/>
        <end position="206"/>
    </location>
</feature>
<feature type="active site" description="Proton acceptor" evidence="1">
    <location>
        <position position="161"/>
    </location>
</feature>
<feature type="binding site" evidence="1">
    <location>
        <position position="60"/>
    </location>
    <ligand>
        <name>S-adenosyl-L-methionine</name>
        <dbReference type="ChEBI" id="CHEBI:59789"/>
    </ligand>
</feature>
<feature type="binding site" evidence="1">
    <location>
        <position position="62"/>
    </location>
    <ligand>
        <name>S-adenosyl-L-methionine</name>
        <dbReference type="ChEBI" id="CHEBI:59789"/>
    </ligand>
</feature>
<feature type="binding site" evidence="1">
    <location>
        <position position="80"/>
    </location>
    <ligand>
        <name>S-adenosyl-L-methionine</name>
        <dbReference type="ChEBI" id="CHEBI:59789"/>
    </ligand>
</feature>
<feature type="binding site" evidence="1">
    <location>
        <position position="96"/>
    </location>
    <ligand>
        <name>S-adenosyl-L-methionine</name>
        <dbReference type="ChEBI" id="CHEBI:59789"/>
    </ligand>
</feature>
<feature type="binding site" evidence="1">
    <location>
        <position position="121"/>
    </location>
    <ligand>
        <name>S-adenosyl-L-methionine</name>
        <dbReference type="ChEBI" id="CHEBI:59789"/>
    </ligand>
</feature>
<comment type="function">
    <text evidence="1">Specifically methylates the uridine in position 2552 of 23S rRNA at the 2'-O position of the ribose in the fully assembled 50S ribosomal subunit.</text>
</comment>
<comment type="catalytic activity">
    <reaction evidence="1">
        <text>uridine(2552) in 23S rRNA + S-adenosyl-L-methionine = 2'-O-methyluridine(2552) in 23S rRNA + S-adenosyl-L-homocysteine + H(+)</text>
        <dbReference type="Rhea" id="RHEA:42720"/>
        <dbReference type="Rhea" id="RHEA-COMP:10202"/>
        <dbReference type="Rhea" id="RHEA-COMP:10203"/>
        <dbReference type="ChEBI" id="CHEBI:15378"/>
        <dbReference type="ChEBI" id="CHEBI:57856"/>
        <dbReference type="ChEBI" id="CHEBI:59789"/>
        <dbReference type="ChEBI" id="CHEBI:65315"/>
        <dbReference type="ChEBI" id="CHEBI:74478"/>
        <dbReference type="EC" id="2.1.1.166"/>
    </reaction>
</comment>
<comment type="subcellular location">
    <subcellularLocation>
        <location evidence="1">Cytoplasm</location>
    </subcellularLocation>
</comment>
<comment type="similarity">
    <text evidence="1">Belongs to the class I-like SAM-binding methyltransferase superfamily. RNA methyltransferase RlmE family.</text>
</comment>